<protein>
    <recommendedName>
        <fullName evidence="5">Splicing factor Cactin</fullName>
    </recommendedName>
</protein>
<dbReference type="EMBL" id="AC003027">
    <property type="protein sequence ID" value="AAD10685.1"/>
    <property type="molecule type" value="Genomic_DNA"/>
</dbReference>
<dbReference type="EMBL" id="CP002684">
    <property type="protein sequence ID" value="AEE27632.1"/>
    <property type="molecule type" value="Genomic_DNA"/>
</dbReference>
<dbReference type="EMBL" id="CP002684">
    <property type="protein sequence ID" value="AEE27633.1"/>
    <property type="molecule type" value="Genomic_DNA"/>
</dbReference>
<dbReference type="PIR" id="H86169">
    <property type="entry name" value="H86169"/>
</dbReference>
<dbReference type="RefSeq" id="NP_001184904.1">
    <molecule id="F4I2J8-1"/>
    <property type="nucleotide sequence ID" value="NM_001197975.1"/>
</dbReference>
<dbReference type="RefSeq" id="NP_171887.1">
    <molecule id="F4I2J8-2"/>
    <property type="nucleotide sequence ID" value="NM_100272.4"/>
</dbReference>
<dbReference type="SMR" id="F4I2J8"/>
<dbReference type="BioGRID" id="24606">
    <property type="interactions" value="2"/>
</dbReference>
<dbReference type="FunCoup" id="F4I2J8">
    <property type="interactions" value="4268"/>
</dbReference>
<dbReference type="IntAct" id="F4I2J8">
    <property type="interactions" value="4"/>
</dbReference>
<dbReference type="MINT" id="F4I2J8"/>
<dbReference type="STRING" id="3702.F4I2J8"/>
<dbReference type="iPTMnet" id="F4I2J8"/>
<dbReference type="PaxDb" id="3702-AT1G03910.2"/>
<dbReference type="ProteomicsDB" id="239152">
    <molecule id="F4I2J8-1"/>
</dbReference>
<dbReference type="EnsemblPlants" id="AT1G03910.1">
    <molecule id="F4I2J8-2"/>
    <property type="protein sequence ID" value="AT1G03910.1"/>
    <property type="gene ID" value="AT1G03910"/>
</dbReference>
<dbReference type="EnsemblPlants" id="AT1G03910.2">
    <molecule id="F4I2J8-1"/>
    <property type="protein sequence ID" value="AT1G03910.2"/>
    <property type="gene ID" value="AT1G03910"/>
</dbReference>
<dbReference type="GeneID" id="839371"/>
<dbReference type="Gramene" id="AT1G03910.1">
    <molecule id="F4I2J8-2"/>
    <property type="protein sequence ID" value="AT1G03910.1"/>
    <property type="gene ID" value="AT1G03910"/>
</dbReference>
<dbReference type="Gramene" id="AT1G03910.2">
    <molecule id="F4I2J8-1"/>
    <property type="protein sequence ID" value="AT1G03910.2"/>
    <property type="gene ID" value="AT1G03910"/>
</dbReference>
<dbReference type="KEGG" id="ath:AT1G03910"/>
<dbReference type="Araport" id="AT1G03910"/>
<dbReference type="TAIR" id="AT1G03910">
    <property type="gene designation" value="CTN"/>
</dbReference>
<dbReference type="eggNOG" id="KOG2370">
    <property type="taxonomic scope" value="Eukaryota"/>
</dbReference>
<dbReference type="HOGENOM" id="CLU_011759_1_0_1"/>
<dbReference type="InParanoid" id="F4I2J8"/>
<dbReference type="OMA" id="DMATIVQ"/>
<dbReference type="OrthoDB" id="265955at2759"/>
<dbReference type="PRO" id="PR:F4I2J8"/>
<dbReference type="Proteomes" id="UP000006548">
    <property type="component" value="Chromosome 1"/>
</dbReference>
<dbReference type="ExpressionAtlas" id="F4I2J8">
    <property type="expression patterns" value="baseline and differential"/>
</dbReference>
<dbReference type="GO" id="GO:0016607">
    <property type="term" value="C:nuclear speck"/>
    <property type="evidence" value="ECO:0007669"/>
    <property type="project" value="UniProtKB-SubCell"/>
</dbReference>
<dbReference type="GO" id="GO:0005634">
    <property type="term" value="C:nucleus"/>
    <property type="evidence" value="ECO:0000314"/>
    <property type="project" value="TAIR"/>
</dbReference>
<dbReference type="GO" id="GO:0005681">
    <property type="term" value="C:spliceosomal complex"/>
    <property type="evidence" value="ECO:0007669"/>
    <property type="project" value="UniProtKB-KW"/>
</dbReference>
<dbReference type="GO" id="GO:0009793">
    <property type="term" value="P:embryo development ending in seed dormancy"/>
    <property type="evidence" value="ECO:0000315"/>
    <property type="project" value="TAIR"/>
</dbReference>
<dbReference type="GO" id="GO:0000398">
    <property type="term" value="P:mRNA splicing, via spliceosome"/>
    <property type="evidence" value="ECO:0000250"/>
    <property type="project" value="UniProtKB"/>
</dbReference>
<dbReference type="InterPro" id="IPR019134">
    <property type="entry name" value="Cactin_C"/>
</dbReference>
<dbReference type="InterPro" id="IPR018816">
    <property type="entry name" value="Cactin_central"/>
</dbReference>
<dbReference type="PANTHER" id="PTHR21737">
    <property type="entry name" value="POLYGLUTAMINE BINDING PROTEIN 1/MARVEL MEMBRANE-ASSOCIATING DOMAIN CONTAINING 3"/>
    <property type="match status" value="1"/>
</dbReference>
<dbReference type="PANTHER" id="PTHR21737:SF4">
    <property type="entry name" value="SPLICING FACTOR CACTIN"/>
    <property type="match status" value="1"/>
</dbReference>
<dbReference type="Pfam" id="PF10312">
    <property type="entry name" value="Cactin_mid"/>
    <property type="match status" value="2"/>
</dbReference>
<dbReference type="Pfam" id="PF09732">
    <property type="entry name" value="CactinC_cactus"/>
    <property type="match status" value="1"/>
</dbReference>
<dbReference type="SMART" id="SM01050">
    <property type="entry name" value="CactinC_cactus"/>
    <property type="match status" value="1"/>
</dbReference>
<reference key="1">
    <citation type="journal article" date="2000" name="Nature">
        <title>Sequence and analysis of chromosome 1 of the plant Arabidopsis thaliana.</title>
        <authorList>
            <person name="Theologis A."/>
            <person name="Ecker J.R."/>
            <person name="Palm C.J."/>
            <person name="Federspiel N.A."/>
            <person name="Kaul S."/>
            <person name="White O."/>
            <person name="Alonso J."/>
            <person name="Altafi H."/>
            <person name="Araujo R."/>
            <person name="Bowman C.L."/>
            <person name="Brooks S.Y."/>
            <person name="Buehler E."/>
            <person name="Chan A."/>
            <person name="Chao Q."/>
            <person name="Chen H."/>
            <person name="Cheuk R.F."/>
            <person name="Chin C.W."/>
            <person name="Chung M.K."/>
            <person name="Conn L."/>
            <person name="Conway A.B."/>
            <person name="Conway A.R."/>
            <person name="Creasy T.H."/>
            <person name="Dewar K."/>
            <person name="Dunn P."/>
            <person name="Etgu P."/>
            <person name="Feldblyum T.V."/>
            <person name="Feng J.-D."/>
            <person name="Fong B."/>
            <person name="Fujii C.Y."/>
            <person name="Gill J.E."/>
            <person name="Goldsmith A.D."/>
            <person name="Haas B."/>
            <person name="Hansen N.F."/>
            <person name="Hughes B."/>
            <person name="Huizar L."/>
            <person name="Hunter J.L."/>
            <person name="Jenkins J."/>
            <person name="Johnson-Hopson C."/>
            <person name="Khan S."/>
            <person name="Khaykin E."/>
            <person name="Kim C.J."/>
            <person name="Koo H.L."/>
            <person name="Kremenetskaia I."/>
            <person name="Kurtz D.B."/>
            <person name="Kwan A."/>
            <person name="Lam B."/>
            <person name="Langin-Hooper S."/>
            <person name="Lee A."/>
            <person name="Lee J.M."/>
            <person name="Lenz C.A."/>
            <person name="Li J.H."/>
            <person name="Li Y.-P."/>
            <person name="Lin X."/>
            <person name="Liu S.X."/>
            <person name="Liu Z.A."/>
            <person name="Luros J.S."/>
            <person name="Maiti R."/>
            <person name="Marziali A."/>
            <person name="Militscher J."/>
            <person name="Miranda M."/>
            <person name="Nguyen M."/>
            <person name="Nierman W.C."/>
            <person name="Osborne B.I."/>
            <person name="Pai G."/>
            <person name="Peterson J."/>
            <person name="Pham P.K."/>
            <person name="Rizzo M."/>
            <person name="Rooney T."/>
            <person name="Rowley D."/>
            <person name="Sakano H."/>
            <person name="Salzberg S.L."/>
            <person name="Schwartz J.R."/>
            <person name="Shinn P."/>
            <person name="Southwick A.M."/>
            <person name="Sun H."/>
            <person name="Tallon L.J."/>
            <person name="Tambunga G."/>
            <person name="Toriumi M.J."/>
            <person name="Town C.D."/>
            <person name="Utterback T."/>
            <person name="Van Aken S."/>
            <person name="Vaysberg M."/>
            <person name="Vysotskaia V.S."/>
            <person name="Walker M."/>
            <person name="Wu D."/>
            <person name="Yu G."/>
            <person name="Fraser C.M."/>
            <person name="Venter J.C."/>
            <person name="Davis R.W."/>
        </authorList>
    </citation>
    <scope>NUCLEOTIDE SEQUENCE [LARGE SCALE GENOMIC DNA]</scope>
    <source>
        <strain>cv. Columbia</strain>
    </source>
</reference>
<reference key="2">
    <citation type="journal article" date="2017" name="Plant J.">
        <title>Araport11: a complete reannotation of the Arabidopsis thaliana reference genome.</title>
        <authorList>
            <person name="Cheng C.Y."/>
            <person name="Krishnakumar V."/>
            <person name="Chan A.P."/>
            <person name="Thibaud-Nissen F."/>
            <person name="Schobel S."/>
            <person name="Town C.D."/>
        </authorList>
    </citation>
    <scope>GENOME REANNOTATION</scope>
    <source>
        <strain>cv. Columbia</strain>
    </source>
</reference>
<reference key="3">
    <citation type="journal article" date="2009" name="J. Proteomics">
        <title>Phosphoproteomic analysis of nuclei-enriched fractions from Arabidopsis thaliana.</title>
        <authorList>
            <person name="Jones A.M.E."/>
            <person name="MacLean D."/>
            <person name="Studholme D.J."/>
            <person name="Serna-Sanz A."/>
            <person name="Andreasson E."/>
            <person name="Rathjen J.P."/>
            <person name="Peck S.C."/>
        </authorList>
    </citation>
    <scope>PHOSPHORYLATION [LARGE SCALE ANALYSIS] AT SER-450</scope>
    <scope>IDENTIFICATION BY MASS SPECTROMETRY [LARGE SCALE ANALYSIS]</scope>
    <source>
        <strain>cv. Columbia</strain>
    </source>
</reference>
<reference key="4">
    <citation type="journal article" date="2009" name="Plant Physiol.">
        <title>Large-scale Arabidopsis phosphoproteome profiling reveals novel chloroplast kinase substrates and phosphorylation networks.</title>
        <authorList>
            <person name="Reiland S."/>
            <person name="Messerli G."/>
            <person name="Baerenfaller K."/>
            <person name="Gerrits B."/>
            <person name="Endler A."/>
            <person name="Grossmann J."/>
            <person name="Gruissem W."/>
            <person name="Baginsky S."/>
        </authorList>
    </citation>
    <scope>PHOSPHORYLATION [LARGE SCALE ANALYSIS] AT SER-450</scope>
    <scope>IDENTIFICATION BY MASS SPECTROMETRY [LARGE SCALE ANALYSIS]</scope>
</reference>
<reference key="5">
    <citation type="journal article" date="2013" name="FEBS Lett.">
        <title>CACTIN is an essential nuclear protein in Arabidopsis and may be associated with the eukaryotic spliceosome.</title>
        <authorList>
            <person name="Baldwin K.L."/>
            <person name="Dinh E.M."/>
            <person name="Hart B.M."/>
            <person name="Masson P.H."/>
        </authorList>
    </citation>
    <scope>FUNCTION</scope>
    <scope>SUBCELLULAR LOCATION</scope>
    <scope>DISRUPTION PHENOTYPE</scope>
    <scope>INTERACTION WITH AT5G63440</scope>
</reference>
<feature type="chain" id="PRO_0000429604" description="Splicing factor Cactin">
    <location>
        <begin position="1"/>
        <end position="716"/>
    </location>
</feature>
<feature type="region of interest" description="Disordered" evidence="3">
    <location>
        <begin position="1"/>
        <end position="104"/>
    </location>
</feature>
<feature type="region of interest" description="Disordered" evidence="3">
    <location>
        <begin position="466"/>
        <end position="525"/>
    </location>
</feature>
<feature type="coiled-coil region" evidence="2">
    <location>
        <begin position="153"/>
        <end position="201"/>
    </location>
</feature>
<feature type="compositionally biased region" description="Basic and acidic residues" evidence="3">
    <location>
        <begin position="10"/>
        <end position="22"/>
    </location>
</feature>
<feature type="compositionally biased region" description="Low complexity" evidence="3">
    <location>
        <begin position="25"/>
        <end position="45"/>
    </location>
</feature>
<feature type="compositionally biased region" description="Basic residues" evidence="3">
    <location>
        <begin position="46"/>
        <end position="61"/>
    </location>
</feature>
<feature type="compositionally biased region" description="Basic and acidic residues" evidence="3">
    <location>
        <begin position="81"/>
        <end position="95"/>
    </location>
</feature>
<feature type="compositionally biased region" description="Acidic residues" evidence="3">
    <location>
        <begin position="468"/>
        <end position="500"/>
    </location>
</feature>
<feature type="modified residue" description="Phosphoserine" evidence="6 7">
    <location>
        <position position="450"/>
    </location>
</feature>
<feature type="splice variant" id="VSP_054997" description="In isoform 2." evidence="5">
    <location>
        <begin position="257"/>
        <end position="300"/>
    </location>
</feature>
<name>CATIN_ARATH</name>
<keyword id="KW-0025">Alternative splicing</keyword>
<keyword id="KW-0175">Coiled coil</keyword>
<keyword id="KW-0507">mRNA processing</keyword>
<keyword id="KW-0508">mRNA splicing</keyword>
<keyword id="KW-0539">Nucleus</keyword>
<keyword id="KW-0597">Phosphoprotein</keyword>
<keyword id="KW-1185">Reference proteome</keyword>
<keyword id="KW-0747">Spliceosome</keyword>
<gene>
    <name type="primary">CTN</name>
    <name type="ordered locus">At1g03910</name>
    <name type="ORF">F21M11.16</name>
</gene>
<comment type="function">
    <text evidence="1 4">Plays a role in pre-mRNA splicing by facilitating excision of a subset of introns (By similarity). Required for embryogenesis (PubMed:23454656).</text>
</comment>
<comment type="subunit">
    <text evidence="4">Interacts with At5g63440.</text>
</comment>
<comment type="interaction">
    <interactant intactId="EBI-8454629">
        <id>F4I2J8</id>
    </interactant>
    <interactant intactId="EBI-8454619">
        <id>Q8GWQ6</id>
        <label>At5g63440</label>
    </interactant>
    <organismsDiffer>false</organismsDiffer>
    <experiments>4</experiments>
</comment>
<comment type="subcellular location">
    <subcellularLocation>
        <location evidence="4">Nucleus speckle</location>
    </subcellularLocation>
</comment>
<comment type="alternative products">
    <event type="alternative splicing"/>
    <isoform>
        <id>F4I2J8-1</id>
        <name>1</name>
        <sequence type="displayed"/>
    </isoform>
    <isoform>
        <id>F4I2J8-2</id>
        <name>2</name>
        <sequence type="described" ref="VSP_054997"/>
    </isoform>
</comment>
<comment type="disruption phenotype">
    <text evidence="4">Embryo lethality when homozygous.</text>
</comment>
<comment type="similarity">
    <text evidence="5">Belongs to the CACTIN family.</text>
</comment>
<evidence type="ECO:0000250" key="1">
    <source>
        <dbReference type="UniProtKB" id="Q8WUQ7"/>
    </source>
</evidence>
<evidence type="ECO:0000255" key="2"/>
<evidence type="ECO:0000256" key="3">
    <source>
        <dbReference type="SAM" id="MobiDB-lite"/>
    </source>
</evidence>
<evidence type="ECO:0000269" key="4">
    <source>
    </source>
</evidence>
<evidence type="ECO:0000305" key="5"/>
<evidence type="ECO:0007744" key="6">
    <source>
    </source>
</evidence>
<evidence type="ECO:0007744" key="7">
    <source>
    </source>
</evidence>
<proteinExistence type="evidence at protein level"/>
<sequence>MGSHGKGKRDRSGRQKKRRDESESGSESESYTSDSDGSDDLSPPRSSRRKKGSSSRRTRRRSSSDDSSDSDGGRKSKKRSSSKDYSEEKVTEYMSKKAQKKALRAAKKLKTQSVSGYSNDSNPFGDSNLTETFVWRKKIEKDVHRGVPLEEFSVKAEKRRHRERMTEVEKVKKRREERAVEKARHEEEMALLARERARAEFHDWEKKEEEFHFDQSKVRSEIRLREGRLKPIDVLCKHLDGSDDLDIELSEPYMVFKKKKVRIGIWLNFQLSITNVYVEAEYKNDSACLLLRSRVDILLNKGLTVKDMEELRDDIKMYLDLDRATPTRVQYWEALIVVCDWELAEARKRDALDRARVRGEEPPAELLAQERGLHAGVEADVRKLLDGKTHAELVELQLDIESQLRSGSAKVVEYWEAVLKRLEIYKAKACLKEIHAEMLRRHLHRLEQLSEGEDDVEVNPGLTRVVEENEEEINDTNLSDAEEAFSPEPVAEEEEADEAAEAAGSFSPELMHGDDREEAIDPEEDKKLLQMKRMIVLEKQKKRLKEAMDSKPAPVEDNLELKAMKAMGAMEEGDAIFGSNAEVNLDSEVYWWHDKYRPRKPKYFNRVHTGYEWNKYNQTHYDHDNPPPKIVQGYKFNIFYPDLVDKIKAPIYTIEKDGTSAETCMIRFHAGPPYEDIAFRIVNKEWEYSHKKGFKCTFERGILHLYFNFKRHRYRR</sequence>
<accession>F4I2J8</accession>
<accession>Q9ZWB1</accession>
<organism>
    <name type="scientific">Arabidopsis thaliana</name>
    <name type="common">Mouse-ear cress</name>
    <dbReference type="NCBI Taxonomy" id="3702"/>
    <lineage>
        <taxon>Eukaryota</taxon>
        <taxon>Viridiplantae</taxon>
        <taxon>Streptophyta</taxon>
        <taxon>Embryophyta</taxon>
        <taxon>Tracheophyta</taxon>
        <taxon>Spermatophyta</taxon>
        <taxon>Magnoliopsida</taxon>
        <taxon>eudicotyledons</taxon>
        <taxon>Gunneridae</taxon>
        <taxon>Pentapetalae</taxon>
        <taxon>rosids</taxon>
        <taxon>malvids</taxon>
        <taxon>Brassicales</taxon>
        <taxon>Brassicaceae</taxon>
        <taxon>Camelineae</taxon>
        <taxon>Arabidopsis</taxon>
    </lineage>
</organism>